<sequence>DKLIGSCVWGAVNYTSDCNGECKRRGYKGGHCGSFANVNCWCET</sequence>
<proteinExistence type="evidence at protein level"/>
<dbReference type="PDB" id="1I2U">
    <property type="method" value="NMR"/>
    <property type="chains" value="A=1-44"/>
</dbReference>
<dbReference type="PDB" id="1I2V">
    <property type="method" value="NMR"/>
    <property type="chains" value="A=1-44"/>
</dbReference>
<dbReference type="PDBsum" id="1I2U"/>
<dbReference type="PDBsum" id="1I2V"/>
<dbReference type="SMR" id="P81544"/>
<dbReference type="EvolutionaryTrace" id="P81544"/>
<dbReference type="GO" id="GO:0005576">
    <property type="term" value="C:extracellular region"/>
    <property type="evidence" value="ECO:0007669"/>
    <property type="project" value="UniProtKB-SubCell"/>
</dbReference>
<dbReference type="GO" id="GO:0050832">
    <property type="term" value="P:defense response to fungus"/>
    <property type="evidence" value="ECO:0007669"/>
    <property type="project" value="UniProtKB-KW"/>
</dbReference>
<dbReference type="GO" id="GO:0045087">
    <property type="term" value="P:innate immune response"/>
    <property type="evidence" value="ECO:0007669"/>
    <property type="project" value="UniProtKB-KW"/>
</dbReference>
<dbReference type="GO" id="GO:0031640">
    <property type="term" value="P:killing of cells of another organism"/>
    <property type="evidence" value="ECO:0007669"/>
    <property type="project" value="UniProtKB-KW"/>
</dbReference>
<dbReference type="FunFam" id="3.30.30.10:FF:000012">
    <property type="entry name" value="Defensin ARD1"/>
    <property type="match status" value="1"/>
</dbReference>
<dbReference type="Gene3D" id="3.30.30.10">
    <property type="entry name" value="Knottin, scorpion toxin-like"/>
    <property type="match status" value="1"/>
</dbReference>
<dbReference type="InterPro" id="IPR001542">
    <property type="entry name" value="Defensin_invertebrate/fungal"/>
</dbReference>
<dbReference type="InterPro" id="IPR036574">
    <property type="entry name" value="Scorpion_toxin-like_sf"/>
</dbReference>
<dbReference type="SUPFAM" id="SSF57095">
    <property type="entry name" value="Scorpion toxin-like"/>
    <property type="match status" value="1"/>
</dbReference>
<dbReference type="PROSITE" id="PS51378">
    <property type="entry name" value="INVERT_DEFENSINS"/>
    <property type="match status" value="1"/>
</dbReference>
<protein>
    <recommendedName>
        <fullName>Defensin heliomicin</fullName>
    </recommendedName>
</protein>
<feature type="chain" id="PRO_0000074477" description="Defensin heliomicin">
    <location>
        <begin position="1"/>
        <end position="44"/>
    </location>
</feature>
<feature type="disulfide bond">
    <location>
        <begin position="7"/>
        <end position="32"/>
    </location>
</feature>
<feature type="disulfide bond">
    <location>
        <begin position="18"/>
        <end position="40"/>
    </location>
</feature>
<feature type="disulfide bond">
    <location>
        <begin position="22"/>
        <end position="42"/>
    </location>
</feature>
<feature type="strand" evidence="3">
    <location>
        <begin position="2"/>
        <end position="6"/>
    </location>
</feature>
<feature type="strand" evidence="3">
    <location>
        <begin position="8"/>
        <end position="11"/>
    </location>
</feature>
<feature type="helix" evidence="3">
    <location>
        <begin position="18"/>
        <end position="24"/>
    </location>
</feature>
<feature type="strand" evidence="3">
    <location>
        <begin position="30"/>
        <end position="32"/>
    </location>
</feature>
<feature type="strand" evidence="3">
    <location>
        <begin position="34"/>
        <end position="37"/>
    </location>
</feature>
<feature type="strand" evidence="3">
    <location>
        <begin position="39"/>
        <end position="42"/>
    </location>
</feature>
<keyword id="KW-0002">3D-structure</keyword>
<keyword id="KW-0929">Antimicrobial</keyword>
<keyword id="KW-0211">Defensin</keyword>
<keyword id="KW-0903">Direct protein sequencing</keyword>
<keyword id="KW-1015">Disulfide bond</keyword>
<keyword id="KW-0295">Fungicide</keyword>
<keyword id="KW-0391">Immunity</keyword>
<keyword id="KW-0399">Innate immunity</keyword>
<keyword id="KW-0964">Secreted</keyword>
<name>DEFN_HELVI</name>
<comment type="function">
    <text>This peptide has potent anti-fungal activity. Has no activity against Gram-negative and Gram-positive bacteria.</text>
</comment>
<comment type="subcellular location">
    <subcellularLocation>
        <location>Secreted</location>
    </subcellularLocation>
</comment>
<comment type="mass spectrometry"/>
<comment type="similarity">
    <text evidence="1">Belongs to the invertebrate defensin family. Type 2 subfamily.</text>
</comment>
<reference key="1">
    <citation type="journal article" date="1999" name="J. Biol. Chem.">
        <title>Insect immunity. Isolation from the lepidopteran Heliothis virescens of a novel insect defensin with potent antifungal activity.</title>
        <authorList>
            <person name="Lamberty M."/>
            <person name="Ades S."/>
            <person name="Uttenweiler-Joseph S."/>
            <person name="Brookhart G."/>
            <person name="Bushey D."/>
            <person name="Hoffmann J.A."/>
            <person name="Bulet P."/>
        </authorList>
    </citation>
    <scope>PROTEIN SEQUENCE</scope>
    <scope>CHARACTERIZATION</scope>
    <scope>MASS SPECTROMETRY</scope>
    <source>
        <tissue>Hemolymph</tissue>
    </source>
</reference>
<reference key="2">
    <citation type="journal article" date="2001" name="Biochemistry">
        <title>Solution structures of the antifungal heliomicin and a selected variant with both antibacterial and antifungal activities.</title>
        <authorList>
            <person name="Lamberty M."/>
            <person name="Caille A."/>
            <person name="Landon C."/>
            <person name="Tassin-Moindrot S."/>
            <person name="Hetru C."/>
            <person name="Bulet P."/>
            <person name="Vovelle F."/>
        </authorList>
    </citation>
    <scope>STRUCTURE BY NMR</scope>
</reference>
<evidence type="ECO:0000255" key="1">
    <source>
        <dbReference type="PROSITE-ProRule" id="PRU00710"/>
    </source>
</evidence>
<evidence type="ECO:0000269" key="2">
    <source>
    </source>
</evidence>
<evidence type="ECO:0007829" key="3">
    <source>
        <dbReference type="PDB" id="1I2U"/>
    </source>
</evidence>
<organism>
    <name type="scientific">Heliothis virescens</name>
    <name type="common">Tobacco budworm moth</name>
    <dbReference type="NCBI Taxonomy" id="7102"/>
    <lineage>
        <taxon>Eukaryota</taxon>
        <taxon>Metazoa</taxon>
        <taxon>Ecdysozoa</taxon>
        <taxon>Arthropoda</taxon>
        <taxon>Hexapoda</taxon>
        <taxon>Insecta</taxon>
        <taxon>Pterygota</taxon>
        <taxon>Neoptera</taxon>
        <taxon>Endopterygota</taxon>
        <taxon>Lepidoptera</taxon>
        <taxon>Glossata</taxon>
        <taxon>Ditrysia</taxon>
        <taxon>Noctuoidea</taxon>
        <taxon>Noctuidae</taxon>
        <taxon>Heliothinae</taxon>
        <taxon>Heliothis</taxon>
    </lineage>
</organism>
<accession>P81544</accession>